<accession>A5UID8</accession>
<protein>
    <recommendedName>
        <fullName evidence="1">Lipoprotein signal peptidase</fullName>
        <ecNumber evidence="1">3.4.23.36</ecNumber>
    </recommendedName>
    <alternativeName>
        <fullName evidence="1">Prolipoprotein signal peptidase</fullName>
    </alternativeName>
    <alternativeName>
        <fullName evidence="1">Signal peptidase II</fullName>
        <shortName evidence="1">SPase II</shortName>
    </alternativeName>
</protein>
<feature type="chain" id="PRO_1000038805" description="Lipoprotein signal peptidase">
    <location>
        <begin position="1"/>
        <end position="171"/>
    </location>
</feature>
<feature type="transmembrane region" description="Helical" evidence="1">
    <location>
        <begin position="8"/>
        <end position="28"/>
    </location>
</feature>
<feature type="transmembrane region" description="Helical" evidence="1">
    <location>
        <begin position="64"/>
        <end position="84"/>
    </location>
</feature>
<feature type="transmembrane region" description="Helical" evidence="1">
    <location>
        <begin position="99"/>
        <end position="119"/>
    </location>
</feature>
<feature type="transmembrane region" description="Helical" evidence="1">
    <location>
        <begin position="133"/>
        <end position="153"/>
    </location>
</feature>
<feature type="active site" evidence="1">
    <location>
        <position position="120"/>
    </location>
</feature>
<feature type="active site" evidence="1">
    <location>
        <position position="138"/>
    </location>
</feature>
<dbReference type="EC" id="3.4.23.36" evidence="1"/>
<dbReference type="EMBL" id="CP000672">
    <property type="protein sequence ID" value="ABR00544.1"/>
    <property type="molecule type" value="Genomic_DNA"/>
</dbReference>
<dbReference type="SMR" id="A5UID8"/>
<dbReference type="MEROPS" id="A08.001"/>
<dbReference type="KEGG" id="hiq:CGSHiGG_08630"/>
<dbReference type="HOGENOM" id="CLU_083252_4_0_6"/>
<dbReference type="UniPathway" id="UPA00665"/>
<dbReference type="Proteomes" id="UP000001990">
    <property type="component" value="Chromosome"/>
</dbReference>
<dbReference type="GO" id="GO:0005886">
    <property type="term" value="C:plasma membrane"/>
    <property type="evidence" value="ECO:0007669"/>
    <property type="project" value="UniProtKB-SubCell"/>
</dbReference>
<dbReference type="GO" id="GO:0004190">
    <property type="term" value="F:aspartic-type endopeptidase activity"/>
    <property type="evidence" value="ECO:0007669"/>
    <property type="project" value="UniProtKB-UniRule"/>
</dbReference>
<dbReference type="GO" id="GO:0006508">
    <property type="term" value="P:proteolysis"/>
    <property type="evidence" value="ECO:0007669"/>
    <property type="project" value="UniProtKB-KW"/>
</dbReference>
<dbReference type="HAMAP" id="MF_00161">
    <property type="entry name" value="LspA"/>
    <property type="match status" value="1"/>
</dbReference>
<dbReference type="InterPro" id="IPR001872">
    <property type="entry name" value="Peptidase_A8"/>
</dbReference>
<dbReference type="NCBIfam" id="TIGR00077">
    <property type="entry name" value="lspA"/>
    <property type="match status" value="1"/>
</dbReference>
<dbReference type="PANTHER" id="PTHR33695">
    <property type="entry name" value="LIPOPROTEIN SIGNAL PEPTIDASE"/>
    <property type="match status" value="1"/>
</dbReference>
<dbReference type="PANTHER" id="PTHR33695:SF1">
    <property type="entry name" value="LIPOPROTEIN SIGNAL PEPTIDASE"/>
    <property type="match status" value="1"/>
</dbReference>
<dbReference type="Pfam" id="PF01252">
    <property type="entry name" value="Peptidase_A8"/>
    <property type="match status" value="1"/>
</dbReference>
<dbReference type="PRINTS" id="PR00781">
    <property type="entry name" value="LIPOSIGPTASE"/>
</dbReference>
<dbReference type="PROSITE" id="PS00855">
    <property type="entry name" value="SPASE_II"/>
    <property type="match status" value="1"/>
</dbReference>
<comment type="function">
    <text evidence="1">This protein specifically catalyzes the removal of signal peptides from prolipoproteins.</text>
</comment>
<comment type="catalytic activity">
    <reaction evidence="1">
        <text>Release of signal peptides from bacterial membrane prolipoproteins. Hydrolyzes -Xaa-Yaa-Zaa-|-(S,diacylglyceryl)Cys-, in which Xaa is hydrophobic (preferably Leu), and Yaa (Ala or Ser) and Zaa (Gly or Ala) have small, neutral side chains.</text>
        <dbReference type="EC" id="3.4.23.36"/>
    </reaction>
</comment>
<comment type="pathway">
    <text evidence="1">Protein modification; lipoprotein biosynthesis (signal peptide cleavage).</text>
</comment>
<comment type="subcellular location">
    <subcellularLocation>
        <location evidence="1">Cell inner membrane</location>
        <topology evidence="1">Multi-pass membrane protein</topology>
    </subcellularLocation>
</comment>
<comment type="similarity">
    <text evidence="1">Belongs to the peptidase A8 family.</text>
</comment>
<evidence type="ECO:0000255" key="1">
    <source>
        <dbReference type="HAMAP-Rule" id="MF_00161"/>
    </source>
</evidence>
<keyword id="KW-0064">Aspartyl protease</keyword>
<keyword id="KW-0997">Cell inner membrane</keyword>
<keyword id="KW-1003">Cell membrane</keyword>
<keyword id="KW-0378">Hydrolase</keyword>
<keyword id="KW-0472">Membrane</keyword>
<keyword id="KW-0645">Protease</keyword>
<keyword id="KW-0812">Transmembrane</keyword>
<keyword id="KW-1133">Transmembrane helix</keyword>
<proteinExistence type="inferred from homology"/>
<reference key="1">
    <citation type="journal article" date="2007" name="Genome Biol.">
        <title>Characterization and modeling of the Haemophilus influenzae core and supragenomes based on the complete genomic sequences of Rd and 12 clinical nontypeable strains.</title>
        <authorList>
            <person name="Hogg J.S."/>
            <person name="Hu F.Z."/>
            <person name="Janto B."/>
            <person name="Boissy R."/>
            <person name="Hayes J."/>
            <person name="Keefe R."/>
            <person name="Post J.C."/>
            <person name="Ehrlich G.D."/>
        </authorList>
    </citation>
    <scope>NUCLEOTIDE SEQUENCE [LARGE SCALE GENOMIC DNA]</scope>
    <source>
        <strain>PittGG</strain>
    </source>
</reference>
<name>LSPA_HAEIG</name>
<organism>
    <name type="scientific">Haemophilus influenzae (strain PittGG)</name>
    <dbReference type="NCBI Taxonomy" id="374931"/>
    <lineage>
        <taxon>Bacteria</taxon>
        <taxon>Pseudomonadati</taxon>
        <taxon>Pseudomonadota</taxon>
        <taxon>Gammaproteobacteria</taxon>
        <taxon>Pasteurellales</taxon>
        <taxon>Pasteurellaceae</taxon>
        <taxon>Haemophilus</taxon>
    </lineage>
</organism>
<sequence>MSKKSGLSFLWLSAVAFVVDLLTKYIVVQKFDLYESVNVLPVFNLTYVRNYGAAFSFLADHSGWQQYFFILLALAISGMLVYFLAKNNAEQKIQNSAYALIIGGALANMVDRAYNGFVVDFFDFYWDIYHYPVFNIADIAICIGAGLLALDAFKSEKKKVQDKQVEKCGQK</sequence>
<gene>
    <name evidence="1" type="primary">lspA</name>
    <name type="ordered locus">CGSHiGG_08630</name>
</gene>